<gene>
    <name type="primary">CRISPLD2</name>
    <name type="synonym">CRISP11</name>
    <name type="synonym">LCRISP2</name>
    <name type="ORF">UNQ2914/PRO1156/PRO9783</name>
</gene>
<organism>
    <name type="scientific">Homo sapiens</name>
    <name type="common">Human</name>
    <dbReference type="NCBI Taxonomy" id="9606"/>
    <lineage>
        <taxon>Eukaryota</taxon>
        <taxon>Metazoa</taxon>
        <taxon>Chordata</taxon>
        <taxon>Craniata</taxon>
        <taxon>Vertebrata</taxon>
        <taxon>Euteleostomi</taxon>
        <taxon>Mammalia</taxon>
        <taxon>Eutheria</taxon>
        <taxon>Euarchontoglires</taxon>
        <taxon>Primates</taxon>
        <taxon>Haplorrhini</taxon>
        <taxon>Catarrhini</taxon>
        <taxon>Hominidae</taxon>
        <taxon>Homo</taxon>
    </lineage>
</organism>
<comment type="function">
    <text evidence="1">Promotes matrix assembly.</text>
</comment>
<comment type="subunit">
    <text evidence="1">Binds to heparin, dermatan sulfate and chondroitin sulfate.</text>
</comment>
<comment type="subcellular location">
    <subcellularLocation>
        <location evidence="1">Secreted</location>
    </subcellularLocation>
</comment>
<comment type="alternative products">
    <event type="alternative splicing"/>
    <isoform>
        <id>Q9H0B8-1</id>
        <name>1</name>
        <sequence type="displayed"/>
    </isoform>
    <isoform>
        <id>Q9H0B8-2</id>
        <name>2</name>
        <sequence type="described" ref="VSP_020183"/>
    </isoform>
    <isoform>
        <id>Q9H0B8-3</id>
        <name>3</name>
        <sequence type="described" ref="VSP_020181 VSP_020182"/>
    </isoform>
    <isoform>
        <id>Q9H0B8-4</id>
        <name>4</name>
        <sequence type="described" ref="VSP_020178 VSP_020180"/>
    </isoform>
    <isoform>
        <id>Q9H0B8-5</id>
        <name>5</name>
        <sequence type="described" ref="VSP_020179"/>
    </isoform>
</comment>
<comment type="similarity">
    <text evidence="11">Belongs to the CRISP family.</text>
</comment>
<proteinExistence type="evidence at protein level"/>
<sequence>MSCVLGGVIPLGLLFLVCGSQGYLLPNVTLLEELLSKYQHNESHSRVRRAIPREDKEEILMLHNKLRGQVQPQASNMEYMTWDDELEKSAAAWASQCIWEHGPTSLLVSIGQNLGAHWGRYRSPGFHVQSWYDEVKDYTYPYPSECNPWCPERCSGPMCTHYTQIVWATTNKIGCAVNTCRKMTVWGEVWENAVYFVCNYSPKGNWIGEAPYKNGRPCSECPPSYGGSCRNNLCYREETYTPKPETDEMNEVETAPIPEENHVWLQPRVMRPTKPKKTSAVNYMTQVVRCDTKMKDRCKGSTCNRYQCPAGCLNHKAKIFGTLFYESSSSICRAAIHYGILDDKGGLVDITRNGKVPFFVKSERHGVQSLSKYKPSSSFMVSKVKVQDLDCYTTVAQLCPFEKPATHCPRIHCPAHCKDEPSYWAPVFGTNIYADTSSICKTAVHAGVISNESGGDVDVMPVDKKKTYVGSLRNGVQSESLGTPRDGKAFRIFAVRQ</sequence>
<dbReference type="EMBL" id="AL136861">
    <property type="protein sequence ID" value="CAB66795.1"/>
    <property type="molecule type" value="mRNA"/>
</dbReference>
<dbReference type="EMBL" id="AY358413">
    <property type="protein sequence ID" value="AAQ88779.1"/>
    <property type="molecule type" value="mRNA"/>
</dbReference>
<dbReference type="EMBL" id="AY358790">
    <property type="protein sequence ID" value="AAQ89150.1"/>
    <property type="molecule type" value="mRNA"/>
</dbReference>
<dbReference type="EMBL" id="AK027395">
    <property type="protein sequence ID" value="BAB55081.1"/>
    <property type="molecule type" value="mRNA"/>
</dbReference>
<dbReference type="EMBL" id="CH471114">
    <property type="protein sequence ID" value="EAW95468.1"/>
    <property type="molecule type" value="Genomic_DNA"/>
</dbReference>
<dbReference type="EMBL" id="CH471114">
    <property type="protein sequence ID" value="EAW95469.1"/>
    <property type="molecule type" value="Genomic_DNA"/>
</dbReference>
<dbReference type="EMBL" id="BC007689">
    <property type="protein sequence ID" value="AAH07689.1"/>
    <property type="molecule type" value="mRNA"/>
</dbReference>
<dbReference type="EMBL" id="BC063012">
    <property type="protein sequence ID" value="AAH63012.1"/>
    <property type="molecule type" value="mRNA"/>
</dbReference>
<dbReference type="CCDS" id="CCDS10949.1">
    <molecule id="Q9H0B8-1"/>
</dbReference>
<dbReference type="RefSeq" id="NP_113664.1">
    <molecule id="Q9H0B8-1"/>
    <property type="nucleotide sequence ID" value="NM_031476.4"/>
</dbReference>
<dbReference type="RefSeq" id="XP_005256247.1">
    <molecule id="Q9H0B8-1"/>
    <property type="nucleotide sequence ID" value="XM_005256190.2"/>
</dbReference>
<dbReference type="SMR" id="Q9H0B8"/>
<dbReference type="BioGRID" id="123739">
    <property type="interactions" value="5"/>
</dbReference>
<dbReference type="FunCoup" id="Q9H0B8">
    <property type="interactions" value="234"/>
</dbReference>
<dbReference type="IntAct" id="Q9H0B8">
    <property type="interactions" value="1"/>
</dbReference>
<dbReference type="STRING" id="9606.ENSP00000262424"/>
<dbReference type="GlyCosmos" id="Q9H0B8">
    <property type="glycosylation" value="3 sites, 1 glycan"/>
</dbReference>
<dbReference type="GlyGen" id="Q9H0B8">
    <property type="glycosylation" value="6 sites, 2 O-linked glycans (3 sites)"/>
</dbReference>
<dbReference type="iPTMnet" id="Q9H0B8"/>
<dbReference type="PhosphoSitePlus" id="Q9H0B8"/>
<dbReference type="BioMuta" id="CRISPLD2"/>
<dbReference type="DMDM" id="74717972"/>
<dbReference type="jPOST" id="Q9H0B8"/>
<dbReference type="MassIVE" id="Q9H0B8"/>
<dbReference type="PaxDb" id="9606-ENSP00000262424"/>
<dbReference type="PeptideAtlas" id="Q9H0B8"/>
<dbReference type="ProteomicsDB" id="80245">
    <molecule id="Q9H0B8-1"/>
</dbReference>
<dbReference type="ProteomicsDB" id="80246">
    <molecule id="Q9H0B8-2"/>
</dbReference>
<dbReference type="ProteomicsDB" id="80247">
    <molecule id="Q9H0B8-3"/>
</dbReference>
<dbReference type="ProteomicsDB" id="80248">
    <molecule id="Q9H0B8-4"/>
</dbReference>
<dbReference type="ProteomicsDB" id="80249">
    <molecule id="Q9H0B8-5"/>
</dbReference>
<dbReference type="Antibodypedia" id="30609">
    <property type="antibodies" value="132 antibodies from 23 providers"/>
</dbReference>
<dbReference type="DNASU" id="83716"/>
<dbReference type="Ensembl" id="ENST00000262424.10">
    <molecule id="Q9H0B8-1"/>
    <property type="protein sequence ID" value="ENSP00000262424.5"/>
    <property type="gene ID" value="ENSG00000103196.12"/>
</dbReference>
<dbReference type="Ensembl" id="ENST00000564567.5">
    <molecule id="Q9H0B8-2"/>
    <property type="protein sequence ID" value="ENSP00000457655.1"/>
    <property type="gene ID" value="ENSG00000103196.12"/>
</dbReference>
<dbReference type="Ensembl" id="ENST00000569090.1">
    <molecule id="Q9H0B8-5"/>
    <property type="protein sequence ID" value="ENSP00000454858.1"/>
    <property type="gene ID" value="ENSG00000103196.12"/>
</dbReference>
<dbReference type="GeneID" id="83716"/>
<dbReference type="KEGG" id="hsa:83716"/>
<dbReference type="MANE-Select" id="ENST00000262424.10">
    <property type="protein sequence ID" value="ENSP00000262424.5"/>
    <property type="RefSeq nucleotide sequence ID" value="NM_031476.4"/>
    <property type="RefSeq protein sequence ID" value="NP_113664.1"/>
</dbReference>
<dbReference type="UCSC" id="uc002fil.3">
    <molecule id="Q9H0B8-1"/>
    <property type="organism name" value="human"/>
</dbReference>
<dbReference type="AGR" id="HGNC:25248"/>
<dbReference type="CTD" id="83716"/>
<dbReference type="DisGeNET" id="83716"/>
<dbReference type="GeneCards" id="CRISPLD2"/>
<dbReference type="HGNC" id="HGNC:25248">
    <property type="gene designation" value="CRISPLD2"/>
</dbReference>
<dbReference type="HPA" id="ENSG00000103196">
    <property type="expression patterns" value="Low tissue specificity"/>
</dbReference>
<dbReference type="MIM" id="612434">
    <property type="type" value="gene"/>
</dbReference>
<dbReference type="neXtProt" id="NX_Q9H0B8"/>
<dbReference type="OpenTargets" id="ENSG00000103196"/>
<dbReference type="PharmGKB" id="PA142672077"/>
<dbReference type="VEuPathDB" id="HostDB:ENSG00000103196"/>
<dbReference type="eggNOG" id="KOG3017">
    <property type="taxonomic scope" value="Eukaryota"/>
</dbReference>
<dbReference type="GeneTree" id="ENSGT00940000157410"/>
<dbReference type="HOGENOM" id="CLU_138283_0_0_1"/>
<dbReference type="InParanoid" id="Q9H0B8"/>
<dbReference type="OMA" id="WVQPRVT"/>
<dbReference type="OrthoDB" id="414826at2759"/>
<dbReference type="PAN-GO" id="Q9H0B8">
    <property type="GO annotations" value="2 GO annotations based on evolutionary models"/>
</dbReference>
<dbReference type="PhylomeDB" id="Q9H0B8"/>
<dbReference type="TreeFam" id="TF316148"/>
<dbReference type="PathwayCommons" id="Q9H0B8"/>
<dbReference type="Reactome" id="R-HSA-6798695">
    <property type="pathway name" value="Neutrophil degranulation"/>
</dbReference>
<dbReference type="SignaLink" id="Q9H0B8"/>
<dbReference type="BioGRID-ORCS" id="83716">
    <property type="hits" value="14 hits in 1148 CRISPR screens"/>
</dbReference>
<dbReference type="ChiTaRS" id="CRISPLD2">
    <property type="organism name" value="human"/>
</dbReference>
<dbReference type="GeneWiki" id="CRISPLD2"/>
<dbReference type="GenomeRNAi" id="83716"/>
<dbReference type="Pharos" id="Q9H0B8">
    <property type="development level" value="Tbio"/>
</dbReference>
<dbReference type="PRO" id="PR:Q9H0B8"/>
<dbReference type="Proteomes" id="UP000005640">
    <property type="component" value="Chromosome 16"/>
</dbReference>
<dbReference type="RNAct" id="Q9H0B8">
    <property type="molecule type" value="protein"/>
</dbReference>
<dbReference type="Bgee" id="ENSG00000103196">
    <property type="expression patterns" value="Expressed in decidua and 201 other cell types or tissues"/>
</dbReference>
<dbReference type="ExpressionAtlas" id="Q9H0B8">
    <property type="expression patterns" value="baseline and differential"/>
</dbReference>
<dbReference type="GO" id="GO:0070062">
    <property type="term" value="C:extracellular exosome"/>
    <property type="evidence" value="ECO:0007005"/>
    <property type="project" value="UniProtKB"/>
</dbReference>
<dbReference type="GO" id="GO:0031012">
    <property type="term" value="C:extracellular matrix"/>
    <property type="evidence" value="ECO:0007669"/>
    <property type="project" value="Ensembl"/>
</dbReference>
<dbReference type="GO" id="GO:0005576">
    <property type="term" value="C:extracellular region"/>
    <property type="evidence" value="ECO:0000304"/>
    <property type="project" value="Reactome"/>
</dbReference>
<dbReference type="GO" id="GO:0005615">
    <property type="term" value="C:extracellular space"/>
    <property type="evidence" value="ECO:0000318"/>
    <property type="project" value="GO_Central"/>
</dbReference>
<dbReference type="GO" id="GO:1904813">
    <property type="term" value="C:ficolin-1-rich granule lumen"/>
    <property type="evidence" value="ECO:0000304"/>
    <property type="project" value="Reactome"/>
</dbReference>
<dbReference type="GO" id="GO:0034774">
    <property type="term" value="C:secretory granule lumen"/>
    <property type="evidence" value="ECO:0000304"/>
    <property type="project" value="Reactome"/>
</dbReference>
<dbReference type="GO" id="GO:0030133">
    <property type="term" value="C:transport vesicle"/>
    <property type="evidence" value="ECO:0000314"/>
    <property type="project" value="LIFEdb"/>
</dbReference>
<dbReference type="GO" id="GO:0005539">
    <property type="term" value="F:glycosaminoglycan binding"/>
    <property type="evidence" value="ECO:0000318"/>
    <property type="project" value="GO_Central"/>
</dbReference>
<dbReference type="GO" id="GO:0008201">
    <property type="term" value="F:heparin binding"/>
    <property type="evidence" value="ECO:0007669"/>
    <property type="project" value="Ensembl"/>
</dbReference>
<dbReference type="GO" id="GO:0030198">
    <property type="term" value="P:extracellular matrix organization"/>
    <property type="evidence" value="ECO:0007669"/>
    <property type="project" value="Ensembl"/>
</dbReference>
<dbReference type="GO" id="GO:0060325">
    <property type="term" value="P:face morphogenesis"/>
    <property type="evidence" value="ECO:0000315"/>
    <property type="project" value="UniProtKB"/>
</dbReference>
<dbReference type="GO" id="GO:0030324">
    <property type="term" value="P:lung development"/>
    <property type="evidence" value="ECO:0007669"/>
    <property type="project" value="Ensembl"/>
</dbReference>
<dbReference type="CDD" id="cd18816">
    <property type="entry name" value="CAP_CRISPLD2"/>
    <property type="match status" value="1"/>
</dbReference>
<dbReference type="FunFam" id="3.40.33.10:FF:000001">
    <property type="entry name" value="Cysteine-rich secretory protein LCCL domain containing 1"/>
    <property type="match status" value="1"/>
</dbReference>
<dbReference type="FunFam" id="2.170.130.20:FF:000001">
    <property type="entry name" value="Cysteine-rich secretory protein LCCL domain-containing 1"/>
    <property type="match status" value="2"/>
</dbReference>
<dbReference type="Gene3D" id="3.40.33.10">
    <property type="entry name" value="CAP"/>
    <property type="match status" value="1"/>
</dbReference>
<dbReference type="Gene3D" id="2.170.130.20">
    <property type="entry name" value="LCCL-like domain"/>
    <property type="match status" value="2"/>
</dbReference>
<dbReference type="InterPro" id="IPR018244">
    <property type="entry name" value="Allrgn_V5/Tpx1_CS"/>
</dbReference>
<dbReference type="InterPro" id="IPR014044">
    <property type="entry name" value="CAP_dom"/>
</dbReference>
<dbReference type="InterPro" id="IPR035940">
    <property type="entry name" value="CAP_sf"/>
</dbReference>
<dbReference type="InterPro" id="IPR051957">
    <property type="entry name" value="CRISP-LCCL_domain"/>
</dbReference>
<dbReference type="InterPro" id="IPR001283">
    <property type="entry name" value="CRISP-related"/>
</dbReference>
<dbReference type="InterPro" id="IPR004043">
    <property type="entry name" value="LCCL"/>
</dbReference>
<dbReference type="InterPro" id="IPR036609">
    <property type="entry name" value="LCCL_sf"/>
</dbReference>
<dbReference type="PANTHER" id="PTHR31331:SF1">
    <property type="entry name" value="CYSTEINE RICH SECRETORY PROTEIN LCCL DOMAIN CONTAINING 2"/>
    <property type="match status" value="1"/>
</dbReference>
<dbReference type="PANTHER" id="PTHR31331">
    <property type="entry name" value="LCCL DOMAIN PROTEIN (AFU_ORTHOLOGUE AFUA_5G08630)"/>
    <property type="match status" value="1"/>
</dbReference>
<dbReference type="Pfam" id="PF00188">
    <property type="entry name" value="CAP"/>
    <property type="match status" value="1"/>
</dbReference>
<dbReference type="Pfam" id="PF03815">
    <property type="entry name" value="LCCL"/>
    <property type="match status" value="2"/>
</dbReference>
<dbReference type="PRINTS" id="PR00837">
    <property type="entry name" value="V5TPXLIKE"/>
</dbReference>
<dbReference type="SMART" id="SM00603">
    <property type="entry name" value="LCCL"/>
    <property type="match status" value="2"/>
</dbReference>
<dbReference type="SMART" id="SM00198">
    <property type="entry name" value="SCP"/>
    <property type="match status" value="1"/>
</dbReference>
<dbReference type="SUPFAM" id="SSF69848">
    <property type="entry name" value="LCCL domain"/>
    <property type="match status" value="2"/>
</dbReference>
<dbReference type="SUPFAM" id="SSF55797">
    <property type="entry name" value="PR-1-like"/>
    <property type="match status" value="1"/>
</dbReference>
<dbReference type="PROSITE" id="PS01010">
    <property type="entry name" value="CRISP_2"/>
    <property type="match status" value="1"/>
</dbReference>
<dbReference type="PROSITE" id="PS50820">
    <property type="entry name" value="LCCL"/>
    <property type="match status" value="2"/>
</dbReference>
<keyword id="KW-0025">Alternative splicing</keyword>
<keyword id="KW-1015">Disulfide bond</keyword>
<keyword id="KW-0325">Glycoprotein</keyword>
<keyword id="KW-1267">Proteomics identification</keyword>
<keyword id="KW-1185">Reference proteome</keyword>
<keyword id="KW-0677">Repeat</keyword>
<keyword id="KW-0964">Secreted</keyword>
<keyword id="KW-0732">Signal</keyword>
<evidence type="ECO:0000250" key="1"/>
<evidence type="ECO:0000255" key="2"/>
<evidence type="ECO:0000255" key="3">
    <source>
        <dbReference type="PROSITE-ProRule" id="PRU00123"/>
    </source>
</evidence>
<evidence type="ECO:0000269" key="4">
    <source>
    </source>
</evidence>
<evidence type="ECO:0000269" key="5">
    <source>
    </source>
</evidence>
<evidence type="ECO:0000269" key="6">
    <source>
    </source>
</evidence>
<evidence type="ECO:0000269" key="7">
    <source ref="4"/>
</evidence>
<evidence type="ECO:0000303" key="8">
    <source>
    </source>
</evidence>
<evidence type="ECO:0000303" key="9">
    <source>
    </source>
</evidence>
<evidence type="ECO:0000303" key="10">
    <source>
    </source>
</evidence>
<evidence type="ECO:0000305" key="11"/>
<feature type="signal peptide" evidence="2">
    <location>
        <begin position="1"/>
        <end position="22"/>
    </location>
</feature>
<feature type="chain" id="PRO_0000248149" description="Cysteine-rich secretory protein LCCL domain-containing 2">
    <location>
        <begin position="23"/>
        <end position="497"/>
    </location>
</feature>
<feature type="domain" description="SCP">
    <location>
        <begin position="62"/>
        <end position="200"/>
    </location>
</feature>
<feature type="domain" description="LCCL 1" evidence="3">
    <location>
        <begin position="284"/>
        <end position="379"/>
    </location>
</feature>
<feature type="domain" description="LCCL 2" evidence="3">
    <location>
        <begin position="385"/>
        <end position="488"/>
    </location>
</feature>
<feature type="glycosylation site" description="N-linked (GlcNAc...) asparagine" evidence="2">
    <location>
        <position position="27"/>
    </location>
</feature>
<feature type="disulfide bond" evidence="3">
    <location>
        <begin position="290"/>
        <end position="308"/>
    </location>
</feature>
<feature type="disulfide bond" evidence="3">
    <location>
        <begin position="312"/>
        <end position="332"/>
    </location>
</feature>
<feature type="disulfide bond" evidence="3">
    <location>
        <begin position="391"/>
        <end position="413"/>
    </location>
</feature>
<feature type="disulfide bond" evidence="3">
    <location>
        <begin position="417"/>
        <end position="440"/>
    </location>
</feature>
<feature type="splice variant" id="VSP_020178" description="In isoform 4." evidence="8">
    <original>TWDDELEKSAAAWASQCIWEHGPTSLLVSIGQNLGAHWGRYRSPGFHVQSWYDEVKDYTYPYPSECNPWCPERCSGPMC</original>
    <variation>VSAGSGRRGWHRGWGLGHQPALFPSQLCSPASACDGWLRVSSGRGGSRLCSVLFVCFETGSHSATDAGVQWHNRHALKP</variation>
    <location>
        <begin position="81"/>
        <end position="159"/>
    </location>
</feature>
<feature type="splice variant" id="VSP_020179" description="In isoform 5." evidence="10">
    <location>
        <begin position="121"/>
        <end position="497"/>
    </location>
</feature>
<feature type="splice variant" id="VSP_020180" description="In isoform 4." evidence="8">
    <location>
        <begin position="160"/>
        <end position="497"/>
    </location>
</feature>
<feature type="splice variant" id="VSP_020181" description="In isoform 3." evidence="9">
    <original>S</original>
    <variation>R</variation>
    <location>
        <position position="371"/>
    </location>
</feature>
<feature type="splice variant" id="VSP_020182" description="In isoform 3." evidence="9">
    <location>
        <begin position="372"/>
        <end position="497"/>
    </location>
</feature>
<feature type="splice variant" id="VSP_020183" description="In isoform 2." evidence="10">
    <original>TSSICKTAVHAGVISNESGGDVDVMPVDKKKTYVGSLRNGVQSESLGTPRDGKAFRIFAVRQ</original>
    <variation>VSRMHFQQLSRKAC</variation>
    <location>
        <begin position="436"/>
        <end position="497"/>
    </location>
</feature>
<feature type="sequence variant" id="VAR_027256" description="In dbSNP:rs12051468." evidence="5 7">
    <original>S</original>
    <variation>G</variation>
    <location>
        <position position="105"/>
    </location>
</feature>
<feature type="sequence variant" id="VAR_074672" description="In dbSNP:rs1297496215." evidence="6">
    <original>D</original>
    <variation>G</variation>
    <location>
        <position position="137"/>
    </location>
</feature>
<feature type="sequence variant" id="VAR_027257" description="In dbSNP:rs721005." evidence="4 5">
    <original>T</original>
    <variation>S</variation>
    <location>
        <position position="322"/>
    </location>
</feature>
<reference key="1">
    <citation type="journal article" date="2001" name="Genome Res.">
        <title>Towards a catalog of human genes and proteins: sequencing and analysis of 500 novel complete protein coding human cDNAs.</title>
        <authorList>
            <person name="Wiemann S."/>
            <person name="Weil B."/>
            <person name="Wellenreuther R."/>
            <person name="Gassenhuber J."/>
            <person name="Glassl S."/>
            <person name="Ansorge W."/>
            <person name="Boecher M."/>
            <person name="Bloecker H."/>
            <person name="Bauersachs S."/>
            <person name="Blum H."/>
            <person name="Lauber J."/>
            <person name="Duesterhoeft A."/>
            <person name="Beyer A."/>
            <person name="Koehrer K."/>
            <person name="Strack N."/>
            <person name="Mewes H.-W."/>
            <person name="Ottenwaelder B."/>
            <person name="Obermaier B."/>
            <person name="Tampe J."/>
            <person name="Heubner D."/>
            <person name="Wambutt R."/>
            <person name="Korn B."/>
            <person name="Klein M."/>
            <person name="Poustka A."/>
        </authorList>
    </citation>
    <scope>NUCLEOTIDE SEQUENCE [LARGE SCALE MRNA] (ISOFORM 1)</scope>
    <source>
        <tissue>Testis</tissue>
    </source>
</reference>
<reference key="2">
    <citation type="journal article" date="2003" name="Genome Res.">
        <title>The secreted protein discovery initiative (SPDI), a large-scale effort to identify novel human secreted and transmembrane proteins: a bioinformatics assessment.</title>
        <authorList>
            <person name="Clark H.F."/>
            <person name="Gurney A.L."/>
            <person name="Abaya E."/>
            <person name="Baker K."/>
            <person name="Baldwin D.T."/>
            <person name="Brush J."/>
            <person name="Chen J."/>
            <person name="Chow B."/>
            <person name="Chui C."/>
            <person name="Crowley C."/>
            <person name="Currell B."/>
            <person name="Deuel B."/>
            <person name="Dowd P."/>
            <person name="Eaton D."/>
            <person name="Foster J.S."/>
            <person name="Grimaldi C."/>
            <person name="Gu Q."/>
            <person name="Hass P.E."/>
            <person name="Heldens S."/>
            <person name="Huang A."/>
            <person name="Kim H.S."/>
            <person name="Klimowski L."/>
            <person name="Jin Y."/>
            <person name="Johnson S."/>
            <person name="Lee J."/>
            <person name="Lewis L."/>
            <person name="Liao D."/>
            <person name="Mark M.R."/>
            <person name="Robbie E."/>
            <person name="Sanchez C."/>
            <person name="Schoenfeld J."/>
            <person name="Seshagiri S."/>
            <person name="Simmons L."/>
            <person name="Singh J."/>
            <person name="Smith V."/>
            <person name="Stinson J."/>
            <person name="Vagts A."/>
            <person name="Vandlen R.L."/>
            <person name="Watanabe C."/>
            <person name="Wieand D."/>
            <person name="Woods K."/>
            <person name="Xie M.-H."/>
            <person name="Yansura D.G."/>
            <person name="Yi S."/>
            <person name="Yu G."/>
            <person name="Yuan J."/>
            <person name="Zhang M."/>
            <person name="Zhang Z."/>
            <person name="Goddard A.D."/>
            <person name="Wood W.I."/>
            <person name="Godowski P.J."/>
            <person name="Gray A.M."/>
        </authorList>
    </citation>
    <scope>NUCLEOTIDE SEQUENCE [LARGE SCALE MRNA] (ISOFORMS 1 AND 4)</scope>
    <scope>VARIANT SER-322</scope>
</reference>
<reference key="3">
    <citation type="journal article" date="2004" name="Nat. Genet.">
        <title>Complete sequencing and characterization of 21,243 full-length human cDNAs.</title>
        <authorList>
            <person name="Ota T."/>
            <person name="Suzuki Y."/>
            <person name="Nishikawa T."/>
            <person name="Otsuki T."/>
            <person name="Sugiyama T."/>
            <person name="Irie R."/>
            <person name="Wakamatsu A."/>
            <person name="Hayashi K."/>
            <person name="Sato H."/>
            <person name="Nagai K."/>
            <person name="Kimura K."/>
            <person name="Makita H."/>
            <person name="Sekine M."/>
            <person name="Obayashi M."/>
            <person name="Nishi T."/>
            <person name="Shibahara T."/>
            <person name="Tanaka T."/>
            <person name="Ishii S."/>
            <person name="Yamamoto J."/>
            <person name="Saito K."/>
            <person name="Kawai Y."/>
            <person name="Isono Y."/>
            <person name="Nakamura Y."/>
            <person name="Nagahari K."/>
            <person name="Murakami K."/>
            <person name="Yasuda T."/>
            <person name="Iwayanagi T."/>
            <person name="Wagatsuma M."/>
            <person name="Shiratori A."/>
            <person name="Sudo H."/>
            <person name="Hosoiri T."/>
            <person name="Kaku Y."/>
            <person name="Kodaira H."/>
            <person name="Kondo H."/>
            <person name="Sugawara M."/>
            <person name="Takahashi M."/>
            <person name="Kanda K."/>
            <person name="Yokoi T."/>
            <person name="Furuya T."/>
            <person name="Kikkawa E."/>
            <person name="Omura Y."/>
            <person name="Abe K."/>
            <person name="Kamihara K."/>
            <person name="Katsuta N."/>
            <person name="Sato K."/>
            <person name="Tanikawa M."/>
            <person name="Yamazaki M."/>
            <person name="Ninomiya K."/>
            <person name="Ishibashi T."/>
            <person name="Yamashita H."/>
            <person name="Murakawa K."/>
            <person name="Fujimori K."/>
            <person name="Tanai H."/>
            <person name="Kimata M."/>
            <person name="Watanabe M."/>
            <person name="Hiraoka S."/>
            <person name="Chiba Y."/>
            <person name="Ishida S."/>
            <person name="Ono Y."/>
            <person name="Takiguchi S."/>
            <person name="Watanabe S."/>
            <person name="Yosida M."/>
            <person name="Hotuta T."/>
            <person name="Kusano J."/>
            <person name="Kanehori K."/>
            <person name="Takahashi-Fujii A."/>
            <person name="Hara H."/>
            <person name="Tanase T.-O."/>
            <person name="Nomura Y."/>
            <person name="Togiya S."/>
            <person name="Komai F."/>
            <person name="Hara R."/>
            <person name="Takeuchi K."/>
            <person name="Arita M."/>
            <person name="Imose N."/>
            <person name="Musashino K."/>
            <person name="Yuuki H."/>
            <person name="Oshima A."/>
            <person name="Sasaki N."/>
            <person name="Aotsuka S."/>
            <person name="Yoshikawa Y."/>
            <person name="Matsunawa H."/>
            <person name="Ichihara T."/>
            <person name="Shiohata N."/>
            <person name="Sano S."/>
            <person name="Moriya S."/>
            <person name="Momiyama H."/>
            <person name="Satoh N."/>
            <person name="Takami S."/>
            <person name="Terashima Y."/>
            <person name="Suzuki O."/>
            <person name="Nakagawa S."/>
            <person name="Senoh A."/>
            <person name="Mizoguchi H."/>
            <person name="Goto Y."/>
            <person name="Shimizu F."/>
            <person name="Wakebe H."/>
            <person name="Hishigaki H."/>
            <person name="Watanabe T."/>
            <person name="Sugiyama A."/>
            <person name="Takemoto M."/>
            <person name="Kawakami B."/>
            <person name="Yamazaki M."/>
            <person name="Watanabe K."/>
            <person name="Kumagai A."/>
            <person name="Itakura S."/>
            <person name="Fukuzumi Y."/>
            <person name="Fujimori Y."/>
            <person name="Komiyama M."/>
            <person name="Tashiro H."/>
            <person name="Tanigami A."/>
            <person name="Fujiwara T."/>
            <person name="Ono T."/>
            <person name="Yamada K."/>
            <person name="Fujii Y."/>
            <person name="Ozaki K."/>
            <person name="Hirao M."/>
            <person name="Ohmori Y."/>
            <person name="Kawabata A."/>
            <person name="Hikiji T."/>
            <person name="Kobatake N."/>
            <person name="Inagaki H."/>
            <person name="Ikema Y."/>
            <person name="Okamoto S."/>
            <person name="Okitani R."/>
            <person name="Kawakami T."/>
            <person name="Noguchi S."/>
            <person name="Itoh T."/>
            <person name="Shigeta K."/>
            <person name="Senba T."/>
            <person name="Matsumura K."/>
            <person name="Nakajima Y."/>
            <person name="Mizuno T."/>
            <person name="Morinaga M."/>
            <person name="Sasaki M."/>
            <person name="Togashi T."/>
            <person name="Oyama M."/>
            <person name="Hata H."/>
            <person name="Watanabe M."/>
            <person name="Komatsu T."/>
            <person name="Mizushima-Sugano J."/>
            <person name="Satoh T."/>
            <person name="Shirai Y."/>
            <person name="Takahashi Y."/>
            <person name="Nakagawa K."/>
            <person name="Okumura K."/>
            <person name="Nagase T."/>
            <person name="Nomura N."/>
            <person name="Kikuchi H."/>
            <person name="Masuho Y."/>
            <person name="Yamashita R."/>
            <person name="Nakai K."/>
            <person name="Yada T."/>
            <person name="Nakamura Y."/>
            <person name="Ohara O."/>
            <person name="Isogai T."/>
            <person name="Sugano S."/>
        </authorList>
    </citation>
    <scope>NUCLEOTIDE SEQUENCE [LARGE SCALE MRNA] (ISOFORM 3)</scope>
    <source>
        <tissue>Mammary gland</tissue>
    </source>
</reference>
<reference key="4">
    <citation type="submission" date="2005-09" db="EMBL/GenBank/DDBJ databases">
        <authorList>
            <person name="Mural R.J."/>
            <person name="Istrail S."/>
            <person name="Sutton G.G."/>
            <person name="Florea L."/>
            <person name="Halpern A.L."/>
            <person name="Mobarry C.M."/>
            <person name="Lippert R."/>
            <person name="Walenz B."/>
            <person name="Shatkay H."/>
            <person name="Dew I."/>
            <person name="Miller J.R."/>
            <person name="Flanigan M.J."/>
            <person name="Edwards N.J."/>
            <person name="Bolanos R."/>
            <person name="Fasulo D."/>
            <person name="Halldorsson B.V."/>
            <person name="Hannenhalli S."/>
            <person name="Turner R."/>
            <person name="Yooseph S."/>
            <person name="Lu F."/>
            <person name="Nusskern D.R."/>
            <person name="Shue B.C."/>
            <person name="Zheng X.H."/>
            <person name="Zhong F."/>
            <person name="Delcher A.L."/>
            <person name="Huson D.H."/>
            <person name="Kravitz S.A."/>
            <person name="Mouchard L."/>
            <person name="Reinert K."/>
            <person name="Remington K.A."/>
            <person name="Clark A.G."/>
            <person name="Waterman M.S."/>
            <person name="Eichler E.E."/>
            <person name="Adams M.D."/>
            <person name="Hunkapiller M.W."/>
            <person name="Myers E.W."/>
            <person name="Venter J.C."/>
        </authorList>
    </citation>
    <scope>NUCLEOTIDE SEQUENCE [LARGE SCALE GENOMIC DNA]</scope>
    <scope>VARIANT GLY-105</scope>
</reference>
<reference key="5">
    <citation type="journal article" date="2004" name="Genome Res.">
        <title>The status, quality, and expansion of the NIH full-length cDNA project: the Mammalian Gene Collection (MGC).</title>
        <authorList>
            <consortium name="The MGC Project Team"/>
        </authorList>
    </citation>
    <scope>NUCLEOTIDE SEQUENCE [LARGE SCALE MRNA] (ISOFORMS 2 AND 5)</scope>
    <scope>VARIANTS GLY-105 AND SER-322</scope>
    <source>
        <tissue>Blood</tissue>
        <tissue>Melanoma</tissue>
    </source>
</reference>
<reference key="6">
    <citation type="journal article" date="2015" name="Hum. Mol. Genet.">
        <title>Galanin pathogenic mutations in temporal lobe epilepsy.</title>
        <authorList>
            <person name="Guipponi M."/>
            <person name="Chentouf A."/>
            <person name="Webling K.E."/>
            <person name="Freimann K."/>
            <person name="Crespel A."/>
            <person name="Nobile C."/>
            <person name="Lemke J.R."/>
            <person name="Hansen J."/>
            <person name="Dorn T."/>
            <person name="Lesca G."/>
            <person name="Ryvlin P."/>
            <person name="Hirsch E."/>
            <person name="Rudolf G."/>
            <person name="Rosenberg D.S."/>
            <person name="Weber Y."/>
            <person name="Becker F."/>
            <person name="Helbig I."/>
            <person name="Muhle H."/>
            <person name="Salzmann A."/>
            <person name="Chaouch M."/>
            <person name="Oubaiche M.L."/>
            <person name="Ziglio S."/>
            <person name="Gehrig C."/>
            <person name="Santoni F."/>
            <person name="Pizzato M."/>
            <person name="Langel U."/>
            <person name="Antonarakis S.E."/>
        </authorList>
    </citation>
    <scope>VARIANT GLY-137</scope>
</reference>
<name>CRLD2_HUMAN</name>
<protein>
    <recommendedName>
        <fullName>Cysteine-rich secretory protein LCCL domain-containing 2</fullName>
    </recommendedName>
    <alternativeName>
        <fullName>Cysteine-rich secretory protein 11</fullName>
        <shortName>CRISP-11</shortName>
    </alternativeName>
    <alternativeName>
        <fullName>LCCL domain-containing cysteine-rich secretory protein 2</fullName>
    </alternativeName>
</protein>
<accession>Q9H0B8</accession>
<accession>D3DUM0</accession>
<accession>Q6P590</accession>
<accession>Q6UWH0</accession>
<accession>Q6UXC6</accession>
<accession>Q96IB1</accession>
<accession>Q96K61</accession>